<keyword id="KW-0687">Ribonucleoprotein</keyword>
<keyword id="KW-0689">Ribosomal protein</keyword>
<keyword id="KW-0694">RNA-binding</keyword>
<keyword id="KW-0699">rRNA-binding</keyword>
<proteinExistence type="inferred from homology"/>
<evidence type="ECO:0000255" key="1">
    <source>
        <dbReference type="HAMAP-Rule" id="MF_01325"/>
    </source>
</evidence>
<evidence type="ECO:0000256" key="2">
    <source>
        <dbReference type="SAM" id="MobiDB-lite"/>
    </source>
</evidence>
<evidence type="ECO:0000305" key="3"/>
<name>RL3_STRE4</name>
<comment type="function">
    <text evidence="1">One of the primary rRNA binding proteins, it binds directly near the 3'-end of the 23S rRNA, where it nucleates assembly of the 50S subunit.</text>
</comment>
<comment type="subunit">
    <text evidence="1">Part of the 50S ribosomal subunit. Forms a cluster with proteins L14 and L19.</text>
</comment>
<comment type="similarity">
    <text evidence="1">Belongs to the universal ribosomal protein uL3 family.</text>
</comment>
<reference key="1">
    <citation type="journal article" date="2009" name="PLoS Pathog.">
        <title>Genomic evidence for the evolution of Streptococcus equi: host restriction, increased virulence, and genetic exchange with human pathogens.</title>
        <authorList>
            <person name="Holden M.T.G."/>
            <person name="Heather Z."/>
            <person name="Paillot R."/>
            <person name="Steward K.F."/>
            <person name="Webb K."/>
            <person name="Ainslie F."/>
            <person name="Jourdan T."/>
            <person name="Bason N.C."/>
            <person name="Holroyd N.E."/>
            <person name="Mungall K."/>
            <person name="Quail M.A."/>
            <person name="Sanders M."/>
            <person name="Simmonds M."/>
            <person name="Willey D."/>
            <person name="Brooks K."/>
            <person name="Aanensen D.M."/>
            <person name="Spratt B.G."/>
            <person name="Jolley K.A."/>
            <person name="Maiden M.C.J."/>
            <person name="Kehoe M."/>
            <person name="Chanter N."/>
            <person name="Bentley S.D."/>
            <person name="Robinson C."/>
            <person name="Maskell D.J."/>
            <person name="Parkhill J."/>
            <person name="Waller A.S."/>
        </authorList>
    </citation>
    <scope>NUCLEOTIDE SEQUENCE [LARGE SCALE GENOMIC DNA]</scope>
    <source>
        <strain>4047</strain>
    </source>
</reference>
<accession>C0M660</accession>
<feature type="chain" id="PRO_1000165905" description="Large ribosomal subunit protein uL3">
    <location>
        <begin position="1"/>
        <end position="208"/>
    </location>
</feature>
<feature type="region of interest" description="Disordered" evidence="2">
    <location>
        <begin position="117"/>
        <end position="149"/>
    </location>
</feature>
<sequence length="208" mass="22393">MTKGILGEKVGMTQIFTESGEFIPVTVIEATPNVVLQVKTVETDGYEAIQVGFDDKREVLSNKPAKGHVAKANTAPKRFIREFKNIEGLEVGAEITVDIFAAGDVVDVTGTSKGKGFQGVIKRHGQSRGPMAHGSRYHRRPGSMGPVSPNRVFKNKHLAGRMGGNRVTIQNLEIVQVIPEKNVILIKGNVPGAKKSLITIKSAVKAAK</sequence>
<organism>
    <name type="scientific">Streptococcus equi subsp. equi (strain 4047)</name>
    <dbReference type="NCBI Taxonomy" id="553482"/>
    <lineage>
        <taxon>Bacteria</taxon>
        <taxon>Bacillati</taxon>
        <taxon>Bacillota</taxon>
        <taxon>Bacilli</taxon>
        <taxon>Lactobacillales</taxon>
        <taxon>Streptococcaceae</taxon>
        <taxon>Streptococcus</taxon>
    </lineage>
</organism>
<gene>
    <name evidence="1" type="primary">rplC</name>
    <name type="ordered locus">SEQ_0055</name>
</gene>
<protein>
    <recommendedName>
        <fullName evidence="1">Large ribosomal subunit protein uL3</fullName>
    </recommendedName>
    <alternativeName>
        <fullName evidence="3">50S ribosomal protein L3</fullName>
    </alternativeName>
</protein>
<dbReference type="EMBL" id="FM204883">
    <property type="protein sequence ID" value="CAW91967.1"/>
    <property type="molecule type" value="Genomic_DNA"/>
</dbReference>
<dbReference type="RefSeq" id="WP_012678791.1">
    <property type="nucleotide sequence ID" value="NC_012471.1"/>
</dbReference>
<dbReference type="SMR" id="C0M660"/>
<dbReference type="KEGG" id="seu:SEQ_0055"/>
<dbReference type="HOGENOM" id="CLU_044142_4_1_9"/>
<dbReference type="OrthoDB" id="9806135at2"/>
<dbReference type="Proteomes" id="UP000001365">
    <property type="component" value="Chromosome"/>
</dbReference>
<dbReference type="GO" id="GO:0022625">
    <property type="term" value="C:cytosolic large ribosomal subunit"/>
    <property type="evidence" value="ECO:0007669"/>
    <property type="project" value="TreeGrafter"/>
</dbReference>
<dbReference type="GO" id="GO:0019843">
    <property type="term" value="F:rRNA binding"/>
    <property type="evidence" value="ECO:0007669"/>
    <property type="project" value="UniProtKB-UniRule"/>
</dbReference>
<dbReference type="GO" id="GO:0003735">
    <property type="term" value="F:structural constituent of ribosome"/>
    <property type="evidence" value="ECO:0007669"/>
    <property type="project" value="InterPro"/>
</dbReference>
<dbReference type="GO" id="GO:0006412">
    <property type="term" value="P:translation"/>
    <property type="evidence" value="ECO:0007669"/>
    <property type="project" value="UniProtKB-UniRule"/>
</dbReference>
<dbReference type="FunFam" id="2.40.30.10:FF:000004">
    <property type="entry name" value="50S ribosomal protein L3"/>
    <property type="match status" value="1"/>
</dbReference>
<dbReference type="FunFam" id="3.30.160.810:FF:000002">
    <property type="entry name" value="50S ribosomal protein L3"/>
    <property type="match status" value="1"/>
</dbReference>
<dbReference type="Gene3D" id="3.30.160.810">
    <property type="match status" value="1"/>
</dbReference>
<dbReference type="Gene3D" id="2.40.30.10">
    <property type="entry name" value="Translation factors"/>
    <property type="match status" value="1"/>
</dbReference>
<dbReference type="HAMAP" id="MF_01325_B">
    <property type="entry name" value="Ribosomal_uL3_B"/>
    <property type="match status" value="1"/>
</dbReference>
<dbReference type="InterPro" id="IPR000597">
    <property type="entry name" value="Ribosomal_uL3"/>
</dbReference>
<dbReference type="InterPro" id="IPR019927">
    <property type="entry name" value="Ribosomal_uL3_bac/org-type"/>
</dbReference>
<dbReference type="InterPro" id="IPR019926">
    <property type="entry name" value="Ribosomal_uL3_CS"/>
</dbReference>
<dbReference type="InterPro" id="IPR009000">
    <property type="entry name" value="Transl_B-barrel_sf"/>
</dbReference>
<dbReference type="NCBIfam" id="TIGR03625">
    <property type="entry name" value="L3_bact"/>
    <property type="match status" value="1"/>
</dbReference>
<dbReference type="PANTHER" id="PTHR11229">
    <property type="entry name" value="50S RIBOSOMAL PROTEIN L3"/>
    <property type="match status" value="1"/>
</dbReference>
<dbReference type="PANTHER" id="PTHR11229:SF16">
    <property type="entry name" value="LARGE RIBOSOMAL SUBUNIT PROTEIN UL3C"/>
    <property type="match status" value="1"/>
</dbReference>
<dbReference type="Pfam" id="PF00297">
    <property type="entry name" value="Ribosomal_L3"/>
    <property type="match status" value="1"/>
</dbReference>
<dbReference type="SUPFAM" id="SSF50447">
    <property type="entry name" value="Translation proteins"/>
    <property type="match status" value="1"/>
</dbReference>
<dbReference type="PROSITE" id="PS00474">
    <property type="entry name" value="RIBOSOMAL_L3"/>
    <property type="match status" value="1"/>
</dbReference>